<evidence type="ECO:0000255" key="1">
    <source>
        <dbReference type="HAMAP-Rule" id="MF_01583"/>
    </source>
</evidence>
<proteinExistence type="inferred from homology"/>
<sequence length="443" mass="48956">MSTTDSIVSSQTKQSSWRKSDTTWTLGLFGTAIGAGVLFFPIRAGFGGLIPILLMLVLAYPIAFYCHRALARLCLSGSNPSGNITETVEEHFGKTGGVVITFLYFFAICPLLWIYGVTITNTFMTFWENQLQMPALNRGVVALFLLLLMAFVIWFGKDLMVKVMSYLVWPFIASLVLISLSLIPYWNSAVIDQVDLSNIALTGHDGILVTVWLGISIMVFSFNFSPIVSSFVVSKREEYEKEFGRDFTERKCSQIISRASMLMVAVVMFFAFSCLFTLSPQNMADAKAQNIPVLSYLANHFASLSGTKSTFATVLEYGASIIALVAIFKSFFGHYLGTLEGLNGLVLKFGYKGDKTKVSMGKLNTISMIFIMGSTWIVAYANPNILDLIEAMGAPIIASLLCLLPMYAIRKAPSLAKYRGRLDNVFVTLIGLLTILNIVYKLF</sequence>
<gene>
    <name evidence="1" type="primary">tdcC</name>
    <name type="ordered locus">SARI_04376</name>
</gene>
<reference key="1">
    <citation type="submission" date="2007-11" db="EMBL/GenBank/DDBJ databases">
        <authorList>
            <consortium name="The Salmonella enterica serovar Arizonae Genome Sequencing Project"/>
            <person name="McClelland M."/>
            <person name="Sanderson E.K."/>
            <person name="Porwollik S."/>
            <person name="Spieth J."/>
            <person name="Clifton W.S."/>
            <person name="Fulton R."/>
            <person name="Chunyan W."/>
            <person name="Wollam A."/>
            <person name="Shah N."/>
            <person name="Pepin K."/>
            <person name="Bhonagiri V."/>
            <person name="Nash W."/>
            <person name="Johnson M."/>
            <person name="Thiruvilangam P."/>
            <person name="Wilson R."/>
        </authorList>
    </citation>
    <scope>NUCLEOTIDE SEQUENCE [LARGE SCALE GENOMIC DNA]</scope>
    <source>
        <strain>ATCC BAA-731 / CDC346-86 / RSK2980</strain>
    </source>
</reference>
<keyword id="KW-0029">Amino-acid transport</keyword>
<keyword id="KW-0997">Cell inner membrane</keyword>
<keyword id="KW-1003">Cell membrane</keyword>
<keyword id="KW-0472">Membrane</keyword>
<keyword id="KW-1185">Reference proteome</keyword>
<keyword id="KW-0769">Symport</keyword>
<keyword id="KW-0812">Transmembrane</keyword>
<keyword id="KW-1133">Transmembrane helix</keyword>
<keyword id="KW-0813">Transport</keyword>
<organism>
    <name type="scientific">Salmonella arizonae (strain ATCC BAA-731 / CDC346-86 / RSK2980)</name>
    <dbReference type="NCBI Taxonomy" id="41514"/>
    <lineage>
        <taxon>Bacteria</taxon>
        <taxon>Pseudomonadati</taxon>
        <taxon>Pseudomonadota</taxon>
        <taxon>Gammaproteobacteria</taxon>
        <taxon>Enterobacterales</taxon>
        <taxon>Enterobacteriaceae</taxon>
        <taxon>Salmonella</taxon>
    </lineage>
</organism>
<name>TDCC_SALAR</name>
<protein>
    <recommendedName>
        <fullName evidence="1">Threonine/serine transporter TdcC</fullName>
    </recommendedName>
    <alternativeName>
        <fullName evidence="1">H(+)/threonine-serine symporter</fullName>
    </alternativeName>
</protein>
<dbReference type="EMBL" id="CP000880">
    <property type="protein sequence ID" value="ABX24154.1"/>
    <property type="molecule type" value="Genomic_DNA"/>
</dbReference>
<dbReference type="STRING" id="41514.SARI_04376"/>
<dbReference type="KEGG" id="ses:SARI_04376"/>
<dbReference type="HOGENOM" id="CLU_052043_1_1_6"/>
<dbReference type="Proteomes" id="UP000002084">
    <property type="component" value="Chromosome"/>
</dbReference>
<dbReference type="GO" id="GO:0005886">
    <property type="term" value="C:plasma membrane"/>
    <property type="evidence" value="ECO:0007669"/>
    <property type="project" value="UniProtKB-SubCell"/>
</dbReference>
<dbReference type="GO" id="GO:0015194">
    <property type="term" value="F:L-serine transmembrane transporter activity"/>
    <property type="evidence" value="ECO:0007669"/>
    <property type="project" value="InterPro"/>
</dbReference>
<dbReference type="GO" id="GO:0015293">
    <property type="term" value="F:symporter activity"/>
    <property type="evidence" value="ECO:0007669"/>
    <property type="project" value="UniProtKB-UniRule"/>
</dbReference>
<dbReference type="GO" id="GO:0015565">
    <property type="term" value="F:threonine efflux transmembrane transporter activity"/>
    <property type="evidence" value="ECO:0007669"/>
    <property type="project" value="InterPro"/>
</dbReference>
<dbReference type="Gene3D" id="1.20.1740.10">
    <property type="entry name" value="Amino acid/polyamine transporter I"/>
    <property type="match status" value="1"/>
</dbReference>
<dbReference type="HAMAP" id="MF_01583">
    <property type="entry name" value="Thr_Ser_transp_TdcC"/>
    <property type="match status" value="1"/>
</dbReference>
<dbReference type="InterPro" id="IPR018227">
    <property type="entry name" value="Amino_acid_transport_2"/>
</dbReference>
<dbReference type="InterPro" id="IPR004694">
    <property type="entry name" value="Hydroxy_aa_transpt"/>
</dbReference>
<dbReference type="InterPro" id="IPR023726">
    <property type="entry name" value="Thr/Ser_transpt_TdcC"/>
</dbReference>
<dbReference type="NCBIfam" id="NF010152">
    <property type="entry name" value="PRK13629.1"/>
    <property type="match status" value="1"/>
</dbReference>
<dbReference type="NCBIfam" id="TIGR00814">
    <property type="entry name" value="stp"/>
    <property type="match status" value="1"/>
</dbReference>
<dbReference type="PANTHER" id="PTHR35334">
    <property type="entry name" value="SERINE TRANSPORTER"/>
    <property type="match status" value="1"/>
</dbReference>
<dbReference type="PANTHER" id="PTHR35334:SF1">
    <property type="entry name" value="THREONINE_SERINE TRANSPORTER TDCC"/>
    <property type="match status" value="1"/>
</dbReference>
<dbReference type="Pfam" id="PF03222">
    <property type="entry name" value="Trp_Tyr_perm"/>
    <property type="match status" value="1"/>
</dbReference>
<comment type="function">
    <text evidence="1">Involved in the import of threonine and serine into the cell, with the concomitant import of a proton (symport system).</text>
</comment>
<comment type="catalytic activity">
    <reaction evidence="1">
        <text>L-threonine(in) + H(+)(in) = L-threonine(out) + H(+)(out)</text>
        <dbReference type="Rhea" id="RHEA:28883"/>
        <dbReference type="ChEBI" id="CHEBI:15378"/>
        <dbReference type="ChEBI" id="CHEBI:57926"/>
    </reaction>
    <physiologicalReaction direction="right-to-left" evidence="1">
        <dbReference type="Rhea" id="RHEA:28885"/>
    </physiologicalReaction>
</comment>
<comment type="catalytic activity">
    <reaction evidence="1">
        <text>L-serine(in) + H(+)(in) = L-serine(out) + H(+)(out)</text>
        <dbReference type="Rhea" id="RHEA:28887"/>
        <dbReference type="ChEBI" id="CHEBI:15378"/>
        <dbReference type="ChEBI" id="CHEBI:33384"/>
    </reaction>
    <physiologicalReaction direction="right-to-left" evidence="1">
        <dbReference type="Rhea" id="RHEA:28889"/>
    </physiologicalReaction>
</comment>
<comment type="subcellular location">
    <subcellularLocation>
        <location evidence="1">Cell inner membrane</location>
        <topology evidence="1">Multi-pass membrane protein</topology>
    </subcellularLocation>
</comment>
<comment type="similarity">
    <text evidence="1">Belongs to the amino acid/polyamine transporter 2 family. SdaC/TdcC subfamily.</text>
</comment>
<feature type="chain" id="PRO_1000087942" description="Threonine/serine transporter TdcC">
    <location>
        <begin position="1"/>
        <end position="443"/>
    </location>
</feature>
<feature type="transmembrane region" description="Helical" evidence="1">
    <location>
        <begin position="22"/>
        <end position="42"/>
    </location>
</feature>
<feature type="transmembrane region" description="Helical" evidence="1">
    <location>
        <begin position="44"/>
        <end position="64"/>
    </location>
</feature>
<feature type="transmembrane region" description="Helical" evidence="1">
    <location>
        <begin position="97"/>
        <end position="117"/>
    </location>
</feature>
<feature type="transmembrane region" description="Helical" evidence="1">
    <location>
        <begin position="140"/>
        <end position="160"/>
    </location>
</feature>
<feature type="transmembrane region" description="Helical" evidence="1">
    <location>
        <begin position="163"/>
        <end position="183"/>
    </location>
</feature>
<feature type="transmembrane region" description="Helical" evidence="1">
    <location>
        <begin position="207"/>
        <end position="227"/>
    </location>
</feature>
<feature type="transmembrane region" description="Helical" evidence="1">
    <location>
        <begin position="259"/>
        <end position="279"/>
    </location>
</feature>
<feature type="transmembrane region" description="Helical" evidence="1">
    <location>
        <begin position="319"/>
        <end position="339"/>
    </location>
</feature>
<feature type="transmembrane region" description="Helical" evidence="1">
    <location>
        <begin position="366"/>
        <end position="386"/>
    </location>
</feature>
<feature type="transmembrane region" description="Helical" evidence="1">
    <location>
        <begin position="389"/>
        <end position="409"/>
    </location>
</feature>
<feature type="transmembrane region" description="Helical" evidence="1">
    <location>
        <begin position="423"/>
        <end position="443"/>
    </location>
</feature>
<accession>A9MPR1</accession>